<gene>
    <name evidence="1" type="primary">cca</name>
    <name type="ordered locus">Bcer98_1260</name>
</gene>
<comment type="function">
    <text evidence="1">Catalyzes the addition and repair of the essential 3'-terminal CCA sequence in tRNAs without using a nucleic acid template. Adds these three nucleotides in the order of C, C, and A to the tRNA nucleotide-73, using CTP and ATP as substrates and producing inorganic pyrophosphate. tRNA 3'-terminal CCA addition is required both for tRNA processing and repair. Also involved in tRNA surveillance by mediating tandem CCA addition to generate a CCACCA at the 3' terminus of unstable tRNAs. While stable tRNAs receive only 3'-terminal CCA, unstable tRNAs are marked with CCACCA and rapidly degraded.</text>
</comment>
<comment type="catalytic activity">
    <reaction evidence="1">
        <text>a tRNA precursor + 2 CTP + ATP = a tRNA with a 3' CCA end + 3 diphosphate</text>
        <dbReference type="Rhea" id="RHEA:14433"/>
        <dbReference type="Rhea" id="RHEA-COMP:10465"/>
        <dbReference type="Rhea" id="RHEA-COMP:10468"/>
        <dbReference type="ChEBI" id="CHEBI:30616"/>
        <dbReference type="ChEBI" id="CHEBI:33019"/>
        <dbReference type="ChEBI" id="CHEBI:37563"/>
        <dbReference type="ChEBI" id="CHEBI:74896"/>
        <dbReference type="ChEBI" id="CHEBI:83071"/>
        <dbReference type="EC" id="2.7.7.72"/>
    </reaction>
</comment>
<comment type="catalytic activity">
    <reaction evidence="1">
        <text>a tRNA with a 3' CCA end + 2 CTP + ATP = a tRNA with a 3' CCACCA end + 3 diphosphate</text>
        <dbReference type="Rhea" id="RHEA:76235"/>
        <dbReference type="Rhea" id="RHEA-COMP:10468"/>
        <dbReference type="Rhea" id="RHEA-COMP:18655"/>
        <dbReference type="ChEBI" id="CHEBI:30616"/>
        <dbReference type="ChEBI" id="CHEBI:33019"/>
        <dbReference type="ChEBI" id="CHEBI:37563"/>
        <dbReference type="ChEBI" id="CHEBI:83071"/>
        <dbReference type="ChEBI" id="CHEBI:195187"/>
    </reaction>
    <physiologicalReaction direction="left-to-right" evidence="1">
        <dbReference type="Rhea" id="RHEA:76236"/>
    </physiologicalReaction>
</comment>
<comment type="cofactor">
    <cofactor evidence="1">
        <name>Mg(2+)</name>
        <dbReference type="ChEBI" id="CHEBI:18420"/>
    </cofactor>
</comment>
<comment type="subunit">
    <text evidence="1">Homodimer.</text>
</comment>
<comment type="miscellaneous">
    <text evidence="1">A single active site specifically recognizes both ATP and CTP and is responsible for their addition.</text>
</comment>
<comment type="similarity">
    <text evidence="1">Belongs to the tRNA nucleotidyltransferase/poly(A) polymerase family. Bacterial CCA-adding enzyme type 3 subfamily.</text>
</comment>
<protein>
    <recommendedName>
        <fullName evidence="1">CCA-adding enzyme</fullName>
        <ecNumber evidence="1">2.7.7.72</ecNumber>
    </recommendedName>
    <alternativeName>
        <fullName evidence="1">CCA tRNA nucleotidyltransferase</fullName>
    </alternativeName>
    <alternativeName>
        <fullName evidence="1">tRNA CCA-pyrophosphorylase</fullName>
    </alternativeName>
    <alternativeName>
        <fullName evidence="1">tRNA adenylyl-/cytidylyl- transferase</fullName>
    </alternativeName>
    <alternativeName>
        <fullName evidence="1">tRNA nucleotidyltransferase</fullName>
    </alternativeName>
    <alternativeName>
        <fullName evidence="1">tRNA-NT</fullName>
    </alternativeName>
</protein>
<keyword id="KW-0067">ATP-binding</keyword>
<keyword id="KW-0460">Magnesium</keyword>
<keyword id="KW-0479">Metal-binding</keyword>
<keyword id="KW-0547">Nucleotide-binding</keyword>
<keyword id="KW-0548">Nucleotidyltransferase</keyword>
<keyword id="KW-0692">RNA repair</keyword>
<keyword id="KW-0694">RNA-binding</keyword>
<keyword id="KW-0808">Transferase</keyword>
<keyword id="KW-0819">tRNA processing</keyword>
<accession>A7GN74</accession>
<organism>
    <name type="scientific">Bacillus cytotoxicus (strain DSM 22905 / CIP 110041 / 391-98 / NVH 391-98)</name>
    <dbReference type="NCBI Taxonomy" id="315749"/>
    <lineage>
        <taxon>Bacteria</taxon>
        <taxon>Bacillati</taxon>
        <taxon>Bacillota</taxon>
        <taxon>Bacilli</taxon>
        <taxon>Bacillales</taxon>
        <taxon>Bacillaceae</taxon>
        <taxon>Bacillus</taxon>
        <taxon>Bacillus cereus group</taxon>
    </lineage>
</organism>
<reference key="1">
    <citation type="journal article" date="2008" name="Chem. Biol. Interact.">
        <title>Extending the Bacillus cereus group genomics to putative food-borne pathogens of different toxicity.</title>
        <authorList>
            <person name="Lapidus A."/>
            <person name="Goltsman E."/>
            <person name="Auger S."/>
            <person name="Galleron N."/>
            <person name="Segurens B."/>
            <person name="Dossat C."/>
            <person name="Land M.L."/>
            <person name="Broussolle V."/>
            <person name="Brillard J."/>
            <person name="Guinebretiere M.-H."/>
            <person name="Sanchis V."/>
            <person name="Nguen-the C."/>
            <person name="Lereclus D."/>
            <person name="Richardson P."/>
            <person name="Wincker P."/>
            <person name="Weissenbach J."/>
            <person name="Ehrlich S.D."/>
            <person name="Sorokin A."/>
        </authorList>
    </citation>
    <scope>NUCLEOTIDE SEQUENCE [LARGE SCALE GENOMIC DNA]</scope>
    <source>
        <strain>DSM 22905 / CIP 110041 / 391-98 / NVH 391-98</strain>
    </source>
</reference>
<evidence type="ECO:0000255" key="1">
    <source>
        <dbReference type="HAMAP-Rule" id="MF_01263"/>
    </source>
</evidence>
<sequence>MKRFKRAGAIIETLKEHGHEAYFVGGSVRDFIIDRPIGDIDIATSALPEEVMKLFPKHVPVGLEHGTVIVLQDGEPYEVTTFRTESDYEDFRRPSSVQFVRSLEEDLKRRDFTMNAIAMNEDGEIIDLFGGQEAIQKREIVTVGNAAERFQEDALRMMRGIRFVSTLGFSLEEKTECAIKRYGHLLEHIAIERITVEFEKLLTGPYCVKGLQKLVETKLFMHLPYLQMSEEKILKAAEYNWESFETEIEAWAFFLSCIGEEHPSVFLRQWKFSNKKIKEIVAVLLAIRTRKTKEWDAVFLYQTGVQIALMAERVYQVMIEEYNMSTVSEVQRLFDSLPIQKRQEMNVSGNDLLSWTDKTPGPWVAEVLQKIEEEILQKRLENEKEAIRGWIEECNLL</sequence>
<feature type="chain" id="PRO_1000085821" description="CCA-adding enzyme">
    <location>
        <begin position="1"/>
        <end position="397"/>
    </location>
</feature>
<feature type="binding site" evidence="1">
    <location>
        <position position="26"/>
    </location>
    <ligand>
        <name>ATP</name>
        <dbReference type="ChEBI" id="CHEBI:30616"/>
    </ligand>
</feature>
<feature type="binding site" evidence="1">
    <location>
        <position position="26"/>
    </location>
    <ligand>
        <name>CTP</name>
        <dbReference type="ChEBI" id="CHEBI:37563"/>
    </ligand>
</feature>
<feature type="binding site" evidence="1">
    <location>
        <position position="29"/>
    </location>
    <ligand>
        <name>ATP</name>
        <dbReference type="ChEBI" id="CHEBI:30616"/>
    </ligand>
</feature>
<feature type="binding site" evidence="1">
    <location>
        <position position="29"/>
    </location>
    <ligand>
        <name>CTP</name>
        <dbReference type="ChEBI" id="CHEBI:37563"/>
    </ligand>
</feature>
<feature type="binding site" evidence="1">
    <location>
        <position position="39"/>
    </location>
    <ligand>
        <name>Mg(2+)</name>
        <dbReference type="ChEBI" id="CHEBI:18420"/>
    </ligand>
</feature>
<feature type="binding site" evidence="1">
    <location>
        <position position="41"/>
    </location>
    <ligand>
        <name>Mg(2+)</name>
        <dbReference type="ChEBI" id="CHEBI:18420"/>
    </ligand>
</feature>
<feature type="binding site" evidence="1">
    <location>
        <position position="110"/>
    </location>
    <ligand>
        <name>ATP</name>
        <dbReference type="ChEBI" id="CHEBI:30616"/>
    </ligand>
</feature>
<feature type="binding site" evidence="1">
    <location>
        <position position="110"/>
    </location>
    <ligand>
        <name>CTP</name>
        <dbReference type="ChEBI" id="CHEBI:37563"/>
    </ligand>
</feature>
<feature type="binding site" evidence="1">
    <location>
        <position position="153"/>
    </location>
    <ligand>
        <name>ATP</name>
        <dbReference type="ChEBI" id="CHEBI:30616"/>
    </ligand>
</feature>
<feature type="binding site" evidence="1">
    <location>
        <position position="153"/>
    </location>
    <ligand>
        <name>CTP</name>
        <dbReference type="ChEBI" id="CHEBI:37563"/>
    </ligand>
</feature>
<feature type="binding site" evidence="1">
    <location>
        <position position="156"/>
    </location>
    <ligand>
        <name>ATP</name>
        <dbReference type="ChEBI" id="CHEBI:30616"/>
    </ligand>
</feature>
<feature type="binding site" evidence="1">
    <location>
        <position position="156"/>
    </location>
    <ligand>
        <name>CTP</name>
        <dbReference type="ChEBI" id="CHEBI:37563"/>
    </ligand>
</feature>
<feature type="binding site" evidence="1">
    <location>
        <position position="159"/>
    </location>
    <ligand>
        <name>ATP</name>
        <dbReference type="ChEBI" id="CHEBI:30616"/>
    </ligand>
</feature>
<feature type="binding site" evidence="1">
    <location>
        <position position="159"/>
    </location>
    <ligand>
        <name>CTP</name>
        <dbReference type="ChEBI" id="CHEBI:37563"/>
    </ligand>
</feature>
<feature type="binding site" evidence="1">
    <location>
        <position position="162"/>
    </location>
    <ligand>
        <name>ATP</name>
        <dbReference type="ChEBI" id="CHEBI:30616"/>
    </ligand>
</feature>
<feature type="binding site" evidence="1">
    <location>
        <position position="162"/>
    </location>
    <ligand>
        <name>CTP</name>
        <dbReference type="ChEBI" id="CHEBI:37563"/>
    </ligand>
</feature>
<dbReference type="EC" id="2.7.7.72" evidence="1"/>
<dbReference type="EMBL" id="CP000764">
    <property type="protein sequence ID" value="ABS21582.1"/>
    <property type="molecule type" value="Genomic_DNA"/>
</dbReference>
<dbReference type="RefSeq" id="WP_012093749.1">
    <property type="nucleotide sequence ID" value="NC_009674.1"/>
</dbReference>
<dbReference type="SMR" id="A7GN74"/>
<dbReference type="STRING" id="315749.Bcer98_1260"/>
<dbReference type="GeneID" id="33896609"/>
<dbReference type="KEGG" id="bcy:Bcer98_1260"/>
<dbReference type="eggNOG" id="COG0617">
    <property type="taxonomic scope" value="Bacteria"/>
</dbReference>
<dbReference type="HOGENOM" id="CLU_015961_3_0_9"/>
<dbReference type="OrthoDB" id="9805698at2"/>
<dbReference type="Proteomes" id="UP000002300">
    <property type="component" value="Chromosome"/>
</dbReference>
<dbReference type="GO" id="GO:0005524">
    <property type="term" value="F:ATP binding"/>
    <property type="evidence" value="ECO:0007669"/>
    <property type="project" value="UniProtKB-UniRule"/>
</dbReference>
<dbReference type="GO" id="GO:0004810">
    <property type="term" value="F:CCA tRNA nucleotidyltransferase activity"/>
    <property type="evidence" value="ECO:0007669"/>
    <property type="project" value="UniProtKB-UniRule"/>
</dbReference>
<dbReference type="GO" id="GO:0000287">
    <property type="term" value="F:magnesium ion binding"/>
    <property type="evidence" value="ECO:0007669"/>
    <property type="project" value="UniProtKB-UniRule"/>
</dbReference>
<dbReference type="GO" id="GO:0000049">
    <property type="term" value="F:tRNA binding"/>
    <property type="evidence" value="ECO:0007669"/>
    <property type="project" value="UniProtKB-UniRule"/>
</dbReference>
<dbReference type="GO" id="GO:0042245">
    <property type="term" value="P:RNA repair"/>
    <property type="evidence" value="ECO:0007669"/>
    <property type="project" value="UniProtKB-KW"/>
</dbReference>
<dbReference type="GO" id="GO:0001680">
    <property type="term" value="P:tRNA 3'-terminal CCA addition"/>
    <property type="evidence" value="ECO:0007669"/>
    <property type="project" value="UniProtKB-UniRule"/>
</dbReference>
<dbReference type="CDD" id="cd05398">
    <property type="entry name" value="NT_ClassII-CCAase"/>
    <property type="match status" value="1"/>
</dbReference>
<dbReference type="Gene3D" id="1.10.110.30">
    <property type="match status" value="1"/>
</dbReference>
<dbReference type="Gene3D" id="1.10.246.80">
    <property type="match status" value="1"/>
</dbReference>
<dbReference type="Gene3D" id="1.20.58.560">
    <property type="match status" value="1"/>
</dbReference>
<dbReference type="Gene3D" id="3.30.460.10">
    <property type="entry name" value="Beta Polymerase, domain 2"/>
    <property type="match status" value="1"/>
</dbReference>
<dbReference type="HAMAP" id="MF_01263">
    <property type="entry name" value="CCA_bact_type3"/>
    <property type="match status" value="1"/>
</dbReference>
<dbReference type="InterPro" id="IPR050264">
    <property type="entry name" value="Bact_CCA-adding_enz_type3_sf"/>
</dbReference>
<dbReference type="InterPro" id="IPR032810">
    <property type="entry name" value="CCA-adding_enz_C"/>
</dbReference>
<dbReference type="InterPro" id="IPR023068">
    <property type="entry name" value="CCA-adding_enz_firmicutes"/>
</dbReference>
<dbReference type="InterPro" id="IPR043519">
    <property type="entry name" value="NT_sf"/>
</dbReference>
<dbReference type="InterPro" id="IPR002646">
    <property type="entry name" value="PolA_pol_head_dom"/>
</dbReference>
<dbReference type="InterPro" id="IPR032828">
    <property type="entry name" value="PolyA_RNA-bd"/>
</dbReference>
<dbReference type="NCBIfam" id="NF009814">
    <property type="entry name" value="PRK13299.1"/>
    <property type="match status" value="1"/>
</dbReference>
<dbReference type="PANTHER" id="PTHR46173">
    <property type="entry name" value="CCA TRNA NUCLEOTIDYLTRANSFERASE 1, MITOCHONDRIAL"/>
    <property type="match status" value="1"/>
</dbReference>
<dbReference type="PANTHER" id="PTHR46173:SF1">
    <property type="entry name" value="CCA TRNA NUCLEOTIDYLTRANSFERASE 1, MITOCHONDRIAL"/>
    <property type="match status" value="1"/>
</dbReference>
<dbReference type="Pfam" id="PF01743">
    <property type="entry name" value="PolyA_pol"/>
    <property type="match status" value="1"/>
</dbReference>
<dbReference type="Pfam" id="PF12627">
    <property type="entry name" value="PolyA_pol_RNAbd"/>
    <property type="match status" value="1"/>
</dbReference>
<dbReference type="Pfam" id="PF13735">
    <property type="entry name" value="tRNA_NucTran2_2"/>
    <property type="match status" value="1"/>
</dbReference>
<dbReference type="SUPFAM" id="SSF81301">
    <property type="entry name" value="Nucleotidyltransferase"/>
    <property type="match status" value="1"/>
</dbReference>
<dbReference type="SUPFAM" id="SSF81891">
    <property type="entry name" value="Poly A polymerase C-terminal region-like"/>
    <property type="match status" value="1"/>
</dbReference>
<name>CCA_BACCN</name>
<proteinExistence type="inferred from homology"/>